<organism>
    <name type="scientific">Thermococcus kodakarensis (strain ATCC BAA-918 / JCM 12380 / KOD1)</name>
    <name type="common">Pyrococcus kodakaraensis (strain KOD1)</name>
    <dbReference type="NCBI Taxonomy" id="69014"/>
    <lineage>
        <taxon>Archaea</taxon>
        <taxon>Methanobacteriati</taxon>
        <taxon>Methanobacteriota</taxon>
        <taxon>Thermococci</taxon>
        <taxon>Thermococcales</taxon>
        <taxon>Thermococcaceae</taxon>
        <taxon>Thermococcus</taxon>
    </lineage>
</organism>
<proteinExistence type="inferred from homology"/>
<comment type="function">
    <text evidence="1">Involved in both the arginine and lysine biosynthetic pathways.</text>
</comment>
<comment type="catalytic activity">
    <reaction evidence="1">
        <text>[amino-group carrier protein]-C-terminal-N-(1-carboxy-5-oxopentan-1-yl)-L-glutamine + phosphate + NADP(+) = [amino-group carrier protein]-C-terminal-N-(1-carboxy-5-phosphooxy-5-oxopentan-1-yl)-L-glutamine + NADPH + H(+)</text>
        <dbReference type="Rhea" id="RHEA:41948"/>
        <dbReference type="Rhea" id="RHEA-COMP:9712"/>
        <dbReference type="Rhea" id="RHEA-COMP:9714"/>
        <dbReference type="ChEBI" id="CHEBI:15378"/>
        <dbReference type="ChEBI" id="CHEBI:43474"/>
        <dbReference type="ChEBI" id="CHEBI:57783"/>
        <dbReference type="ChEBI" id="CHEBI:58349"/>
        <dbReference type="ChEBI" id="CHEBI:78499"/>
        <dbReference type="ChEBI" id="CHEBI:78501"/>
        <dbReference type="EC" id="1.2.1.103"/>
    </reaction>
</comment>
<comment type="catalytic activity">
    <reaction evidence="1">
        <text>[amino-group carrier protein]-C-terminal-gamma-(L-glutamyl-5-semialdehyde)-L-glutamate + phosphate + NADP(+) = [amino-group carrier protein]-C-terminal-gamma-(5-phospho-L-glutamyl)-L-glutamate + NADPH + H(+)</text>
        <dbReference type="Rhea" id="RHEA:52668"/>
        <dbReference type="Rhea" id="RHEA-COMP:13313"/>
        <dbReference type="Rhea" id="RHEA-COMP:13327"/>
        <dbReference type="ChEBI" id="CHEBI:15378"/>
        <dbReference type="ChEBI" id="CHEBI:43474"/>
        <dbReference type="ChEBI" id="CHEBI:57783"/>
        <dbReference type="ChEBI" id="CHEBI:58349"/>
        <dbReference type="ChEBI" id="CHEBI:136717"/>
        <dbReference type="ChEBI" id="CHEBI:136761"/>
        <dbReference type="EC" id="1.2.1.106"/>
    </reaction>
</comment>
<comment type="pathway">
    <text evidence="1">Amino-acid biosynthesis; L-lysine biosynthesis via AAA pathway; L-lysine from L-alpha-aminoadipate (Thermus route): step 3/5.</text>
</comment>
<comment type="pathway">
    <text evidence="1">Amino-acid biosynthesis; L-arginine biosynthesis.</text>
</comment>
<comment type="subcellular location">
    <subcellularLocation>
        <location evidence="1">Cytoplasm</location>
    </subcellularLocation>
</comment>
<comment type="similarity">
    <text evidence="1">Belongs to the NAGSA dehydrogenase family. Type 1 subfamily. LysY sub-subfamily.</text>
</comment>
<feature type="chain" id="PRO_0000112496" description="Putative [LysW]-L-2-aminoadipate/[LysW]-L-glutamate phosphate reductase">
    <location>
        <begin position="1"/>
        <end position="330"/>
    </location>
</feature>
<feature type="active site" evidence="1">
    <location>
        <position position="142"/>
    </location>
</feature>
<feature type="binding site" evidence="1">
    <location>
        <begin position="10"/>
        <end position="13"/>
    </location>
    <ligand>
        <name>NADP(+)</name>
        <dbReference type="ChEBI" id="CHEBI:58349"/>
    </ligand>
</feature>
<feature type="binding site" evidence="1">
    <location>
        <begin position="34"/>
        <end position="36"/>
    </location>
    <ligand>
        <name>NADP(+)</name>
        <dbReference type="ChEBI" id="CHEBI:58349"/>
    </ligand>
</feature>
<feature type="binding site" evidence="1">
    <location>
        <position position="297"/>
    </location>
    <ligand>
        <name>NADP(+)</name>
        <dbReference type="ChEBI" id="CHEBI:58349"/>
    </ligand>
</feature>
<gene>
    <name evidence="1" type="primary">lysY</name>
    <name type="ordered locus">TK0277</name>
</gene>
<reference key="1">
    <citation type="journal article" date="2005" name="Genome Res.">
        <title>Complete genome sequence of the hyperthermophilic archaeon Thermococcus kodakaraensis KOD1 and comparison with Pyrococcus genomes.</title>
        <authorList>
            <person name="Fukui T."/>
            <person name="Atomi H."/>
            <person name="Kanai T."/>
            <person name="Matsumi R."/>
            <person name="Fujiwara S."/>
            <person name="Imanaka T."/>
        </authorList>
    </citation>
    <scope>NUCLEOTIDE SEQUENCE [LARGE SCALE GENOMIC DNA]</scope>
    <source>
        <strain>ATCC BAA-918 / JCM 12380 / KOD1</strain>
    </source>
</reference>
<dbReference type="EC" id="1.2.1.103" evidence="1"/>
<dbReference type="EC" id="1.2.1.106" evidence="1"/>
<dbReference type="EMBL" id="AP006878">
    <property type="protein sequence ID" value="BAD84466.1"/>
    <property type="molecule type" value="Genomic_DNA"/>
</dbReference>
<dbReference type="RefSeq" id="WP_011249232.1">
    <property type="nucleotide sequence ID" value="NC_006624.1"/>
</dbReference>
<dbReference type="SMR" id="Q5JFW1"/>
<dbReference type="FunCoup" id="Q5JFW1">
    <property type="interactions" value="62"/>
</dbReference>
<dbReference type="STRING" id="69014.TK0277"/>
<dbReference type="EnsemblBacteria" id="BAD84466">
    <property type="protein sequence ID" value="BAD84466"/>
    <property type="gene ID" value="TK0277"/>
</dbReference>
<dbReference type="GeneID" id="78446779"/>
<dbReference type="KEGG" id="tko:TK0277"/>
<dbReference type="PATRIC" id="fig|69014.16.peg.276"/>
<dbReference type="eggNOG" id="arCOG00495">
    <property type="taxonomic scope" value="Archaea"/>
</dbReference>
<dbReference type="HOGENOM" id="CLU_006384_0_1_2"/>
<dbReference type="InParanoid" id="Q5JFW1"/>
<dbReference type="OrthoDB" id="372053at2157"/>
<dbReference type="PhylomeDB" id="Q5JFW1"/>
<dbReference type="BRENDA" id="1.2.1.106">
    <property type="organism ID" value="5246"/>
</dbReference>
<dbReference type="UniPathway" id="UPA00033">
    <property type="reaction ID" value="UER00037"/>
</dbReference>
<dbReference type="UniPathway" id="UPA00068"/>
<dbReference type="Proteomes" id="UP000000536">
    <property type="component" value="Chromosome"/>
</dbReference>
<dbReference type="GO" id="GO:0005737">
    <property type="term" value="C:cytoplasm"/>
    <property type="evidence" value="ECO:0007669"/>
    <property type="project" value="UniProtKB-SubCell"/>
</dbReference>
<dbReference type="GO" id="GO:0043870">
    <property type="term" value="F:N-acetyl-gamma-aminoadipyl-phosphate reductase activity"/>
    <property type="evidence" value="ECO:0007669"/>
    <property type="project" value="RHEA"/>
</dbReference>
<dbReference type="GO" id="GO:0003942">
    <property type="term" value="F:N-acetyl-gamma-glutamyl-phosphate reductase activity"/>
    <property type="evidence" value="ECO:0007669"/>
    <property type="project" value="InterPro"/>
</dbReference>
<dbReference type="GO" id="GO:0051287">
    <property type="term" value="F:NAD binding"/>
    <property type="evidence" value="ECO:0007669"/>
    <property type="project" value="InterPro"/>
</dbReference>
<dbReference type="GO" id="GO:0070401">
    <property type="term" value="F:NADP+ binding"/>
    <property type="evidence" value="ECO:0007669"/>
    <property type="project" value="InterPro"/>
</dbReference>
<dbReference type="GO" id="GO:0042450">
    <property type="term" value="P:arginine biosynthetic process via ornithine"/>
    <property type="evidence" value="ECO:0007669"/>
    <property type="project" value="UniProtKB-UniRule"/>
</dbReference>
<dbReference type="GO" id="GO:0006526">
    <property type="term" value="P:L-arginine biosynthetic process"/>
    <property type="evidence" value="ECO:0007669"/>
    <property type="project" value="UniProtKB-UniPathway"/>
</dbReference>
<dbReference type="GO" id="GO:0019878">
    <property type="term" value="P:lysine biosynthetic process via aminoadipic acid"/>
    <property type="evidence" value="ECO:0007669"/>
    <property type="project" value="UniProtKB-UniRule"/>
</dbReference>
<dbReference type="CDD" id="cd23939">
    <property type="entry name" value="AGPR_1_C_LysY"/>
    <property type="match status" value="1"/>
</dbReference>
<dbReference type="CDD" id="cd17895">
    <property type="entry name" value="AGPR_1_N"/>
    <property type="match status" value="1"/>
</dbReference>
<dbReference type="Gene3D" id="3.30.360.10">
    <property type="entry name" value="Dihydrodipicolinate Reductase, domain 2"/>
    <property type="match status" value="1"/>
</dbReference>
<dbReference type="Gene3D" id="3.40.50.720">
    <property type="entry name" value="NAD(P)-binding Rossmann-like Domain"/>
    <property type="match status" value="1"/>
</dbReference>
<dbReference type="HAMAP" id="MF_00150">
    <property type="entry name" value="ArgC_type1"/>
    <property type="match status" value="1"/>
</dbReference>
<dbReference type="HAMAP" id="MF_02083">
    <property type="entry name" value="LysY"/>
    <property type="match status" value="1"/>
</dbReference>
<dbReference type="InterPro" id="IPR023013">
    <property type="entry name" value="AGPR_AS"/>
</dbReference>
<dbReference type="InterPro" id="IPR000706">
    <property type="entry name" value="AGPR_type-1"/>
</dbReference>
<dbReference type="InterPro" id="IPR037535">
    <property type="entry name" value="LysY"/>
</dbReference>
<dbReference type="InterPro" id="IPR036291">
    <property type="entry name" value="NAD(P)-bd_dom_sf"/>
</dbReference>
<dbReference type="InterPro" id="IPR050085">
    <property type="entry name" value="NAGSA_dehydrogenase"/>
</dbReference>
<dbReference type="InterPro" id="IPR000534">
    <property type="entry name" value="Semialdehyde_DH_NAD-bd"/>
</dbReference>
<dbReference type="NCBIfam" id="TIGR01850">
    <property type="entry name" value="argC"/>
    <property type="match status" value="1"/>
</dbReference>
<dbReference type="PANTHER" id="PTHR32338:SF11">
    <property type="entry name" value="[LYSW]-L-2-AMINOADIPATE_[LYSW]-L-GLUTAMATE PHOSPHATE REDUCTASE-RELATED"/>
    <property type="match status" value="1"/>
</dbReference>
<dbReference type="PANTHER" id="PTHR32338">
    <property type="entry name" value="N-ACETYL-GAMMA-GLUTAMYL-PHOSPHATE REDUCTASE, CHLOROPLASTIC-RELATED-RELATED"/>
    <property type="match status" value="1"/>
</dbReference>
<dbReference type="Pfam" id="PF01118">
    <property type="entry name" value="Semialdhyde_dh"/>
    <property type="match status" value="1"/>
</dbReference>
<dbReference type="Pfam" id="PF22698">
    <property type="entry name" value="Semialdhyde_dhC_1"/>
    <property type="match status" value="1"/>
</dbReference>
<dbReference type="SMART" id="SM00859">
    <property type="entry name" value="Semialdhyde_dh"/>
    <property type="match status" value="1"/>
</dbReference>
<dbReference type="SUPFAM" id="SSF55347">
    <property type="entry name" value="Glyceraldehyde-3-phosphate dehydrogenase-like, C-terminal domain"/>
    <property type="match status" value="1"/>
</dbReference>
<dbReference type="SUPFAM" id="SSF51735">
    <property type="entry name" value="NAD(P)-binding Rossmann-fold domains"/>
    <property type="match status" value="1"/>
</dbReference>
<dbReference type="PROSITE" id="PS01224">
    <property type="entry name" value="ARGC"/>
    <property type="match status" value="1"/>
</dbReference>
<sequence>MIKAAVVGASGYIGGELVRLLAMHPEVEITAITSRRFAGQKVHKVHPNLRGLDLRFTNTKEFDADVIFLAVPHGTSMEIIDDYLGSAKIIDMSADFRLREDLYREYYGEHKRPELIEEFVYGLPELHRKEIRKAELVANPGCNATATILALYPFRELTDEAIVDLKVSSSAGGRRENVASIHPERSHVVRVYKPYHHRHEGEVIQETGVKAAFTVHSVDIIRGLLATIYFRFEGSTRELLRKLLVYKDEPFVRLVTDKGGLQRFPDPKYVIGSNFADIGFAHDEENSRAIVLSAIDNLIKGGSGQAVQNMNLMFGLDERTGLNYYPVYPV</sequence>
<name>LYSY_THEKO</name>
<evidence type="ECO:0000255" key="1">
    <source>
        <dbReference type="HAMAP-Rule" id="MF_02083"/>
    </source>
</evidence>
<protein>
    <recommendedName>
        <fullName evidence="1">Putative [LysW]-L-2-aminoadipate/[LysW]-L-glutamate phosphate reductase</fullName>
        <ecNumber evidence="1">1.2.1.103</ecNumber>
        <ecNumber evidence="1">1.2.1.106</ecNumber>
    </recommendedName>
</protein>
<keyword id="KW-0028">Amino-acid biosynthesis</keyword>
<keyword id="KW-0055">Arginine biosynthesis</keyword>
<keyword id="KW-0963">Cytoplasm</keyword>
<keyword id="KW-0457">Lysine biosynthesis</keyword>
<keyword id="KW-0521">NADP</keyword>
<keyword id="KW-0560">Oxidoreductase</keyword>
<keyword id="KW-1185">Reference proteome</keyword>
<accession>Q5JFW1</accession>